<gene>
    <name evidence="1" type="primary">gmk</name>
    <name type="ordered locus">TTE1511</name>
</gene>
<sequence>MSIKKQGLLIVISGPSGAGKGTICKALIEKEKDLKLSISATTRQPRAGEVDGKNYFFKSEEEFKRMIEEDAFLEWAKVYDHYYGTPKEFVLKNLEEGNDVVLEIDIQGALKVKEKFPEGVFIFILPPSMEELRNRIKKRGTESEEEIIKRFKSAYEELNYVSKYNYVVINDDVDRAVEKIRAIIIAEKCRVDRNKDLYLKIREESV</sequence>
<accession>Q8R9S6</accession>
<evidence type="ECO:0000255" key="1">
    <source>
        <dbReference type="HAMAP-Rule" id="MF_00328"/>
    </source>
</evidence>
<reference key="1">
    <citation type="journal article" date="2002" name="Genome Res.">
        <title>A complete sequence of the T. tengcongensis genome.</title>
        <authorList>
            <person name="Bao Q."/>
            <person name="Tian Y."/>
            <person name="Li W."/>
            <person name="Xu Z."/>
            <person name="Xuan Z."/>
            <person name="Hu S."/>
            <person name="Dong W."/>
            <person name="Yang J."/>
            <person name="Chen Y."/>
            <person name="Xue Y."/>
            <person name="Xu Y."/>
            <person name="Lai X."/>
            <person name="Huang L."/>
            <person name="Dong X."/>
            <person name="Ma Y."/>
            <person name="Ling L."/>
            <person name="Tan H."/>
            <person name="Chen R."/>
            <person name="Wang J."/>
            <person name="Yu J."/>
            <person name="Yang H."/>
        </authorList>
    </citation>
    <scope>NUCLEOTIDE SEQUENCE [LARGE SCALE GENOMIC DNA]</scope>
    <source>
        <strain>DSM 15242 / JCM 11007 / NBRC 100824 / MB4</strain>
    </source>
</reference>
<dbReference type="EC" id="2.7.4.8" evidence="1"/>
<dbReference type="EMBL" id="AE008691">
    <property type="protein sequence ID" value="AAM24729.1"/>
    <property type="molecule type" value="Genomic_DNA"/>
</dbReference>
<dbReference type="RefSeq" id="WP_011025768.1">
    <property type="nucleotide sequence ID" value="NZ_JANUCV010000001.1"/>
</dbReference>
<dbReference type="SMR" id="Q8R9S6"/>
<dbReference type="STRING" id="273068.TTE1511"/>
<dbReference type="KEGG" id="tte:TTE1511"/>
<dbReference type="eggNOG" id="COG0194">
    <property type="taxonomic scope" value="Bacteria"/>
</dbReference>
<dbReference type="HOGENOM" id="CLU_001715_1_2_9"/>
<dbReference type="Proteomes" id="UP000000555">
    <property type="component" value="Chromosome"/>
</dbReference>
<dbReference type="GO" id="GO:0005829">
    <property type="term" value="C:cytosol"/>
    <property type="evidence" value="ECO:0007669"/>
    <property type="project" value="TreeGrafter"/>
</dbReference>
<dbReference type="GO" id="GO:0005524">
    <property type="term" value="F:ATP binding"/>
    <property type="evidence" value="ECO:0007669"/>
    <property type="project" value="UniProtKB-UniRule"/>
</dbReference>
<dbReference type="GO" id="GO:0004385">
    <property type="term" value="F:guanylate kinase activity"/>
    <property type="evidence" value="ECO:0007669"/>
    <property type="project" value="UniProtKB-UniRule"/>
</dbReference>
<dbReference type="CDD" id="cd00071">
    <property type="entry name" value="GMPK"/>
    <property type="match status" value="1"/>
</dbReference>
<dbReference type="FunFam" id="3.40.50.300:FF:000855">
    <property type="entry name" value="Guanylate kinase"/>
    <property type="match status" value="1"/>
</dbReference>
<dbReference type="FunFam" id="3.30.63.10:FF:000002">
    <property type="entry name" value="Guanylate kinase 1"/>
    <property type="match status" value="1"/>
</dbReference>
<dbReference type="Gene3D" id="3.30.63.10">
    <property type="entry name" value="Guanylate Kinase phosphate binding domain"/>
    <property type="match status" value="1"/>
</dbReference>
<dbReference type="Gene3D" id="3.40.50.300">
    <property type="entry name" value="P-loop containing nucleotide triphosphate hydrolases"/>
    <property type="match status" value="1"/>
</dbReference>
<dbReference type="HAMAP" id="MF_00328">
    <property type="entry name" value="Guanylate_kinase"/>
    <property type="match status" value="1"/>
</dbReference>
<dbReference type="InterPro" id="IPR008145">
    <property type="entry name" value="GK/Ca_channel_bsu"/>
</dbReference>
<dbReference type="InterPro" id="IPR008144">
    <property type="entry name" value="Guanylate_kin-like_dom"/>
</dbReference>
<dbReference type="InterPro" id="IPR017665">
    <property type="entry name" value="Guanylate_kinase"/>
</dbReference>
<dbReference type="InterPro" id="IPR020590">
    <property type="entry name" value="Guanylate_kinase_CS"/>
</dbReference>
<dbReference type="InterPro" id="IPR027417">
    <property type="entry name" value="P-loop_NTPase"/>
</dbReference>
<dbReference type="NCBIfam" id="TIGR03263">
    <property type="entry name" value="guanyl_kin"/>
    <property type="match status" value="1"/>
</dbReference>
<dbReference type="PANTHER" id="PTHR23117:SF13">
    <property type="entry name" value="GUANYLATE KINASE"/>
    <property type="match status" value="1"/>
</dbReference>
<dbReference type="PANTHER" id="PTHR23117">
    <property type="entry name" value="GUANYLATE KINASE-RELATED"/>
    <property type="match status" value="1"/>
</dbReference>
<dbReference type="Pfam" id="PF00625">
    <property type="entry name" value="Guanylate_kin"/>
    <property type="match status" value="1"/>
</dbReference>
<dbReference type="SMART" id="SM00072">
    <property type="entry name" value="GuKc"/>
    <property type="match status" value="1"/>
</dbReference>
<dbReference type="SUPFAM" id="SSF52540">
    <property type="entry name" value="P-loop containing nucleoside triphosphate hydrolases"/>
    <property type="match status" value="1"/>
</dbReference>
<dbReference type="PROSITE" id="PS00856">
    <property type="entry name" value="GUANYLATE_KINASE_1"/>
    <property type="match status" value="1"/>
</dbReference>
<dbReference type="PROSITE" id="PS50052">
    <property type="entry name" value="GUANYLATE_KINASE_2"/>
    <property type="match status" value="1"/>
</dbReference>
<proteinExistence type="inferred from homology"/>
<organism>
    <name type="scientific">Caldanaerobacter subterraneus subsp. tengcongensis (strain DSM 15242 / JCM 11007 / NBRC 100824 / MB4)</name>
    <name type="common">Thermoanaerobacter tengcongensis</name>
    <dbReference type="NCBI Taxonomy" id="273068"/>
    <lineage>
        <taxon>Bacteria</taxon>
        <taxon>Bacillati</taxon>
        <taxon>Bacillota</taxon>
        <taxon>Clostridia</taxon>
        <taxon>Thermoanaerobacterales</taxon>
        <taxon>Thermoanaerobacteraceae</taxon>
        <taxon>Caldanaerobacter</taxon>
    </lineage>
</organism>
<comment type="function">
    <text evidence="1">Essential for recycling GMP and indirectly, cGMP.</text>
</comment>
<comment type="catalytic activity">
    <reaction evidence="1">
        <text>GMP + ATP = GDP + ADP</text>
        <dbReference type="Rhea" id="RHEA:20780"/>
        <dbReference type="ChEBI" id="CHEBI:30616"/>
        <dbReference type="ChEBI" id="CHEBI:58115"/>
        <dbReference type="ChEBI" id="CHEBI:58189"/>
        <dbReference type="ChEBI" id="CHEBI:456216"/>
        <dbReference type="EC" id="2.7.4.8"/>
    </reaction>
</comment>
<comment type="subcellular location">
    <subcellularLocation>
        <location evidence="1">Cytoplasm</location>
    </subcellularLocation>
</comment>
<comment type="similarity">
    <text evidence="1">Belongs to the guanylate kinase family.</text>
</comment>
<keyword id="KW-0067">ATP-binding</keyword>
<keyword id="KW-0963">Cytoplasm</keyword>
<keyword id="KW-0418">Kinase</keyword>
<keyword id="KW-0547">Nucleotide-binding</keyword>
<keyword id="KW-1185">Reference proteome</keyword>
<keyword id="KW-0808">Transferase</keyword>
<name>KGUA_CALS4</name>
<protein>
    <recommendedName>
        <fullName evidence="1">Guanylate kinase</fullName>
        <ecNumber evidence="1">2.7.4.8</ecNumber>
    </recommendedName>
    <alternativeName>
        <fullName evidence="1">GMP kinase</fullName>
    </alternativeName>
</protein>
<feature type="chain" id="PRO_0000170632" description="Guanylate kinase">
    <location>
        <begin position="1"/>
        <end position="206"/>
    </location>
</feature>
<feature type="domain" description="Guanylate kinase-like" evidence="1">
    <location>
        <begin position="7"/>
        <end position="185"/>
    </location>
</feature>
<feature type="binding site" evidence="1">
    <location>
        <begin position="14"/>
        <end position="21"/>
    </location>
    <ligand>
        <name>ATP</name>
        <dbReference type="ChEBI" id="CHEBI:30616"/>
    </ligand>
</feature>